<gene>
    <name type="primary">CHMP2A</name>
    <name type="synonym">BC2</name>
    <name type="synonym">CHMP2</name>
</gene>
<evidence type="ECO:0000255" key="1"/>
<evidence type="ECO:0000269" key="2">
    <source>
    </source>
</evidence>
<evidence type="ECO:0000269" key="3">
    <source>
    </source>
</evidence>
<evidence type="ECO:0000269" key="4">
    <source>
    </source>
</evidence>
<evidence type="ECO:0000269" key="5">
    <source>
    </source>
</evidence>
<evidence type="ECO:0000269" key="6">
    <source>
    </source>
</evidence>
<evidence type="ECO:0000269" key="7">
    <source>
    </source>
</evidence>
<evidence type="ECO:0000269" key="8">
    <source>
    </source>
</evidence>
<evidence type="ECO:0000269" key="9">
    <source>
    </source>
</evidence>
<evidence type="ECO:0000269" key="10">
    <source>
    </source>
</evidence>
<evidence type="ECO:0000269" key="11">
    <source>
    </source>
</evidence>
<evidence type="ECO:0000269" key="12">
    <source>
    </source>
</evidence>
<evidence type="ECO:0000269" key="13">
    <source>
    </source>
</evidence>
<evidence type="ECO:0000305" key="14"/>
<evidence type="ECO:0007744" key="15">
    <source>
    </source>
</evidence>
<evidence type="ECO:0007744" key="16">
    <source>
    </source>
</evidence>
<evidence type="ECO:0007829" key="17">
    <source>
        <dbReference type="PDB" id="7ZCG"/>
    </source>
</evidence>
<proteinExistence type="evidence at protein level"/>
<organism>
    <name type="scientific">Homo sapiens</name>
    <name type="common">Human</name>
    <dbReference type="NCBI Taxonomy" id="9606"/>
    <lineage>
        <taxon>Eukaryota</taxon>
        <taxon>Metazoa</taxon>
        <taxon>Chordata</taxon>
        <taxon>Craniata</taxon>
        <taxon>Vertebrata</taxon>
        <taxon>Euteleostomi</taxon>
        <taxon>Mammalia</taxon>
        <taxon>Eutheria</taxon>
        <taxon>Euarchontoglires</taxon>
        <taxon>Primates</taxon>
        <taxon>Haplorrhini</taxon>
        <taxon>Catarrhini</taxon>
        <taxon>Hominidae</taxon>
        <taxon>Homo</taxon>
    </lineage>
</organism>
<comment type="function">
    <text evidence="10 12 13 14">Probable core component of the endosomal sorting required for transport complex III (ESCRT-III) which is involved in multivesicular bodies (MVBs) formation and sorting of endosomal cargo proteins into MVBs. MVBs contain intraluminal vesicles (ILVs) that are generated by invagination and scission from the limiting membrane of the endosome and mostly are delivered to lysosomes enabling degradation of membrane proteins, such as stimulated growth factor receptors, lysosomal enzymes and lipids. The MVB pathway appears to require the sequential function of ESCRT-O, -I,-II and -III complexes. ESCRT-III proteins mostly dissociate from the invaginating membrane before the ILV is released. The ESCRT machinery also functions in topologically equivalent membrane fission events, such as the terminal stages of cytokinesis (PubMed:21310966). Together with SPAST, the ESCRT-III complex promotes nuclear envelope sealing and mitotic spindle disassembly during late anaphase (PubMed:26040712). Recruited to the reforming nuclear envelope (NE) during anaphase by LEMD2 (PubMed:28242692). ESCRT-III proteins are believed to mediate the necessary vesicle extrusion and/or membrane fission activities, possibly in conjunction with the AAA ATPase VPS4.</text>
</comment>
<comment type="function">
    <text evidence="4 5">(Microbial infection) The ESCRT machinery functions in topologically equivalent membrane fission events, such as the budding of enveloped viruses (HIV-1 and other lentiviruses). Involved in HIV-1 p6- and p9-dependent virus release.</text>
</comment>
<comment type="subunit">
    <text evidence="2 4 5 6 7 9 11">Probable core component of the endosomal sorting required for transport complex III (ESCRT-III). ESCRT-III components are thought to multimerize to form a flat lattice on the perimeter membrane of the endosome. Several assembly forms of ESCRT-III may exist that interact and act sequentially. In vitro, heteromerizes with CHMP3 (but not CHMP4) to form helical tubular structures that expose membrane-interacting sites on the outside whereas VPS4B can associate on the inside of the tubule. Interacts with CHMP1B, CHMP2B, CHMP3, CHMP4A, CHMP4B, CHMP4C and CHMP5. Interacts with VPS4A; the interaction is direct. Interacts with VPS4B; the interaction is direct. Interacts with MITD1. Interacts with VTA1; the interaction probably involves the open conformation of CHMP2A.</text>
</comment>
<comment type="interaction">
    <interactant intactId="EBI-2692789">
        <id>O43633</id>
    </interactant>
    <interactant intactId="EBI-2118119">
        <id>Q9Y3E7</id>
        <label>CHMP3</label>
    </interactant>
    <organismsDiffer>false</organismsDiffer>
    <experiments>3</experiments>
</comment>
<comment type="interaction">
    <interactant intactId="EBI-2692789">
        <id>O43633</id>
    </interactant>
    <interactant intactId="EBI-15613847">
        <id>Q9Y3E7-1</id>
        <label>CHMP3</label>
    </interactant>
    <organismsDiffer>false</organismsDiffer>
    <experiments>2</experiments>
</comment>
<comment type="interaction">
    <interactant intactId="EBI-2692789">
        <id>O43633</id>
    </interactant>
    <interactant intactId="EBI-749627">
        <id>Q9H444</id>
        <label>CHMP4B</label>
    </interactant>
    <organismsDiffer>false</organismsDiffer>
    <experiments>3</experiments>
</comment>
<comment type="interaction">
    <interactant intactId="EBI-2692789">
        <id>O43633</id>
    </interactant>
    <interactant intactId="EBI-10174653">
        <id>Q8NF50-2</id>
        <label>DOCK8</label>
    </interactant>
    <organismsDiffer>false</organismsDiffer>
    <experiments>3</experiments>
</comment>
<comment type="interaction">
    <interactant intactId="EBI-2692789">
        <id>O43633</id>
    </interactant>
    <interactant intactId="EBI-466029">
        <id>P42858</id>
        <label>HTT</label>
    </interactant>
    <organismsDiffer>false</organismsDiffer>
    <experiments>3</experiments>
</comment>
<comment type="interaction">
    <interactant intactId="EBI-2692789">
        <id>O43633</id>
    </interactant>
    <interactant intactId="EBI-2691489">
        <id>Q8WV92</id>
        <label>MITD1</label>
    </interactant>
    <organismsDiffer>false</organismsDiffer>
    <experiments>8</experiments>
</comment>
<comment type="interaction">
    <interactant intactId="EBI-2692789">
        <id>O43633</id>
    </interactant>
    <interactant intactId="EBI-396676">
        <id>O95630</id>
        <label>STAMBP</label>
    </interactant>
    <organismsDiffer>false</organismsDiffer>
    <experiments>3</experiments>
</comment>
<comment type="interaction">
    <interactant intactId="EBI-2692789">
        <id>O43633</id>
    </interactant>
    <interactant intactId="EBI-1171942">
        <id>Q9UN37</id>
        <label>VPS4A</label>
    </interactant>
    <organismsDiffer>false</organismsDiffer>
    <experiments>4</experiments>
</comment>
<comment type="subcellular location">
    <subcellularLocation>
        <location evidence="6 8">Late endosome membrane</location>
        <topology evidence="6 8">Peripheral membrane protein</topology>
        <orientation evidence="6 8">Cytoplasmic side</orientation>
    </subcellularLocation>
    <subcellularLocation>
        <location evidence="13">Nucleus envelope</location>
    </subcellularLocation>
    <text evidence="13">Localizes to the midbody of dividing cells. Localized in two distinct rings on either side of the Fleming body. Localizes to the reforming nuclear envelope on chromatin disks during late anaphase (PubMed:28242692).</text>
</comment>
<comment type="domain">
    <text>The acidic C-terminus and the basic N-termminus are thought to render the protein in a closed, soluble and inactive conformation through an autoinhibitory intramolecular interaction. The open and active conformation, which enables membrane binding and oligomerization, is achieved by interaction with other cellular binding partners, probably including other ESCRT components.</text>
</comment>
<comment type="PTM">
    <text evidence="11">ISGylated in a CHMP5-dependent manner. Isgylation weakens and inhibits its interactions with VPS4A and VTA1 respectively.</text>
</comment>
<comment type="miscellaneous">
    <text>Its overexpression strongly inhibits HIV-1 release.</text>
</comment>
<comment type="similarity">
    <text evidence="14">Belongs to the SNF7 family.</text>
</comment>
<dbReference type="EMBL" id="AF042384">
    <property type="protein sequence ID" value="AAC00005.1"/>
    <property type="molecule type" value="mRNA"/>
</dbReference>
<dbReference type="EMBL" id="AJ277113">
    <property type="protein sequence ID" value="CAC14310.1"/>
    <property type="molecule type" value="Genomic_DNA"/>
</dbReference>
<dbReference type="EMBL" id="AY364248">
    <property type="protein sequence ID" value="AAQ76807.1"/>
    <property type="molecule type" value="mRNA"/>
</dbReference>
<dbReference type="EMBL" id="BT007298">
    <property type="protein sequence ID" value="AAP35962.1"/>
    <property type="molecule type" value="mRNA"/>
</dbReference>
<dbReference type="EMBL" id="CR457002">
    <property type="protein sequence ID" value="CAG33283.1"/>
    <property type="molecule type" value="mRNA"/>
</dbReference>
<dbReference type="EMBL" id="AK311974">
    <property type="protein sequence ID" value="BAG34913.1"/>
    <property type="molecule type" value="mRNA"/>
</dbReference>
<dbReference type="EMBL" id="CH471135">
    <property type="protein sequence ID" value="EAW72609.1"/>
    <property type="molecule type" value="Genomic_DNA"/>
</dbReference>
<dbReference type="EMBL" id="BC002502">
    <property type="protein sequence ID" value="AAH02502.1"/>
    <property type="molecule type" value="mRNA"/>
</dbReference>
<dbReference type="CCDS" id="CCDS12986.1"/>
<dbReference type="RefSeq" id="NP_055268.1">
    <property type="nucleotide sequence ID" value="NM_014453.4"/>
</dbReference>
<dbReference type="RefSeq" id="NP_940818.1">
    <property type="nucleotide sequence ID" value="NM_198426.3"/>
</dbReference>
<dbReference type="PDB" id="7ZCG">
    <property type="method" value="EM"/>
    <property type="resolution" value="3.30 A"/>
    <property type="chains" value="B=8-154"/>
</dbReference>
<dbReference type="PDB" id="7ZCH">
    <property type="method" value="EM"/>
    <property type="resolution" value="3.60 A"/>
    <property type="chains" value="B=8-154"/>
</dbReference>
<dbReference type="PDBsum" id="7ZCG"/>
<dbReference type="PDBsum" id="7ZCH"/>
<dbReference type="EMDB" id="EMD-14630"/>
<dbReference type="EMDB" id="EMD-14631"/>
<dbReference type="SMR" id="O43633"/>
<dbReference type="BioGRID" id="118091">
    <property type="interactions" value="141"/>
</dbReference>
<dbReference type="ComplexPortal" id="CPX-329">
    <property type="entry name" value="ESCRT-III complex"/>
</dbReference>
<dbReference type="CORUM" id="O43633"/>
<dbReference type="DIP" id="DIP-48533N"/>
<dbReference type="FunCoup" id="O43633">
    <property type="interactions" value="2760"/>
</dbReference>
<dbReference type="IntAct" id="O43633">
    <property type="interactions" value="68"/>
</dbReference>
<dbReference type="MINT" id="O43633"/>
<dbReference type="STRING" id="9606.ENSP00000469240"/>
<dbReference type="GlyGen" id="O43633">
    <property type="glycosylation" value="1 site, 1 O-linked glycan (1 site)"/>
</dbReference>
<dbReference type="iPTMnet" id="O43633"/>
<dbReference type="MetOSite" id="O43633"/>
<dbReference type="PhosphoSitePlus" id="O43633"/>
<dbReference type="BioMuta" id="CHMP2A"/>
<dbReference type="OGP" id="O43633"/>
<dbReference type="jPOST" id="O43633"/>
<dbReference type="MassIVE" id="O43633"/>
<dbReference type="PaxDb" id="9606-ENSP00000469240"/>
<dbReference type="PeptideAtlas" id="O43633"/>
<dbReference type="ProteomicsDB" id="49086"/>
<dbReference type="Pumba" id="O43633"/>
<dbReference type="Antibodypedia" id="33353">
    <property type="antibodies" value="167 antibodies from 24 providers"/>
</dbReference>
<dbReference type="DNASU" id="27243"/>
<dbReference type="Ensembl" id="ENST00000312547.7">
    <property type="protein sequence ID" value="ENSP00000310440.1"/>
    <property type="gene ID" value="ENSG00000130724.10"/>
</dbReference>
<dbReference type="Ensembl" id="ENST00000596708.2">
    <property type="protein sequence ID" value="ENSP00000471961.2"/>
    <property type="gene ID" value="ENSG00000130724.10"/>
</dbReference>
<dbReference type="Ensembl" id="ENST00000597848.2">
    <property type="protein sequence ID" value="ENSP00000469453.2"/>
    <property type="gene ID" value="ENSG00000130724.10"/>
</dbReference>
<dbReference type="Ensembl" id="ENST00000600118.6">
    <property type="protein sequence ID" value="ENSP00000469240.1"/>
    <property type="gene ID" value="ENSG00000130724.10"/>
</dbReference>
<dbReference type="Ensembl" id="ENST00000601220.5">
    <property type="protein sequence ID" value="ENSP00000472680.1"/>
    <property type="gene ID" value="ENSG00000130724.10"/>
</dbReference>
<dbReference type="GeneID" id="27243"/>
<dbReference type="KEGG" id="hsa:27243"/>
<dbReference type="MANE-Select" id="ENST00000312547.7">
    <property type="protein sequence ID" value="ENSP00000310440.1"/>
    <property type="RefSeq nucleotide sequence ID" value="NM_014453.4"/>
    <property type="RefSeq protein sequence ID" value="NP_055268.1"/>
</dbReference>
<dbReference type="UCSC" id="uc002qti.3">
    <property type="organism name" value="human"/>
</dbReference>
<dbReference type="AGR" id="HGNC:30216"/>
<dbReference type="CTD" id="27243"/>
<dbReference type="DisGeNET" id="27243"/>
<dbReference type="GeneCards" id="CHMP2A"/>
<dbReference type="HGNC" id="HGNC:30216">
    <property type="gene designation" value="CHMP2A"/>
</dbReference>
<dbReference type="HPA" id="ENSG00000130724">
    <property type="expression patterns" value="Low tissue specificity"/>
</dbReference>
<dbReference type="MIM" id="610893">
    <property type="type" value="gene"/>
</dbReference>
<dbReference type="neXtProt" id="NX_O43633"/>
<dbReference type="OpenTargets" id="ENSG00000130724"/>
<dbReference type="PharmGKB" id="PA142672111"/>
<dbReference type="VEuPathDB" id="HostDB:ENSG00000130724"/>
<dbReference type="eggNOG" id="KOG3230">
    <property type="taxonomic scope" value="Eukaryota"/>
</dbReference>
<dbReference type="GeneTree" id="ENSGT00950000182832"/>
<dbReference type="HOGENOM" id="CLU_069208_1_0_1"/>
<dbReference type="InParanoid" id="O43633"/>
<dbReference type="OMA" id="KMAKMNQ"/>
<dbReference type="OrthoDB" id="10252926at2759"/>
<dbReference type="PAN-GO" id="O43633">
    <property type="GO annotations" value="5 GO annotations based on evolutionary models"/>
</dbReference>
<dbReference type="PhylomeDB" id="O43633"/>
<dbReference type="TreeFam" id="TF300118"/>
<dbReference type="PathwayCommons" id="O43633"/>
<dbReference type="Reactome" id="R-HSA-162588">
    <property type="pathway name" value="Budding and maturation of HIV virion"/>
</dbReference>
<dbReference type="Reactome" id="R-HSA-1632852">
    <property type="pathway name" value="Macroautophagy"/>
</dbReference>
<dbReference type="Reactome" id="R-HSA-432720">
    <property type="pathway name" value="Lysosome Vesicle Biogenesis"/>
</dbReference>
<dbReference type="Reactome" id="R-HSA-5620971">
    <property type="pathway name" value="Pyroptosis"/>
</dbReference>
<dbReference type="Reactome" id="R-HSA-917729">
    <property type="pathway name" value="Endosomal Sorting Complex Required For Transport (ESCRT)"/>
</dbReference>
<dbReference type="Reactome" id="R-HSA-9610379">
    <property type="pathway name" value="HCMV Late Events"/>
</dbReference>
<dbReference type="Reactome" id="R-HSA-9615710">
    <property type="pathway name" value="Late endosomal microautophagy"/>
</dbReference>
<dbReference type="Reactome" id="R-HSA-9668328">
    <property type="pathway name" value="Sealing of the nuclear envelope (NE) by ESCRT-III"/>
</dbReference>
<dbReference type="Reactome" id="R-HSA-9679504">
    <property type="pathway name" value="Translation of Replicase and Assembly of the Replication Transcription Complex"/>
</dbReference>
<dbReference type="Reactome" id="R-HSA-9694676">
    <property type="pathway name" value="Translation of Replicase and Assembly of the Replication Transcription Complex"/>
</dbReference>
<dbReference type="SignaLink" id="O43633"/>
<dbReference type="SIGNOR" id="O43633"/>
<dbReference type="BioGRID-ORCS" id="27243">
    <property type="hits" value="824 hits in 1174 CRISPR screens"/>
</dbReference>
<dbReference type="ChiTaRS" id="CHMP2A">
    <property type="organism name" value="human"/>
</dbReference>
<dbReference type="GeneWiki" id="CHMP2A"/>
<dbReference type="GenomeRNAi" id="27243"/>
<dbReference type="Pharos" id="O43633">
    <property type="development level" value="Tbio"/>
</dbReference>
<dbReference type="PRO" id="PR:O43633"/>
<dbReference type="Proteomes" id="UP000005640">
    <property type="component" value="Chromosome 19"/>
</dbReference>
<dbReference type="RNAct" id="O43633">
    <property type="molecule type" value="protein"/>
</dbReference>
<dbReference type="Bgee" id="ENSG00000130724">
    <property type="expression patterns" value="Expressed in mucosa of transverse colon and 213 other cell types or tissues"/>
</dbReference>
<dbReference type="ExpressionAtlas" id="O43633">
    <property type="expression patterns" value="baseline and differential"/>
</dbReference>
<dbReference type="GO" id="GO:1904930">
    <property type="term" value="C:amphisome membrane"/>
    <property type="evidence" value="ECO:0000314"/>
    <property type="project" value="ComplexPortal"/>
</dbReference>
<dbReference type="GO" id="GO:0000421">
    <property type="term" value="C:autophagosome membrane"/>
    <property type="evidence" value="ECO:0000314"/>
    <property type="project" value="ComplexPortal"/>
</dbReference>
<dbReference type="GO" id="GO:0000785">
    <property type="term" value="C:chromatin"/>
    <property type="evidence" value="ECO:0000314"/>
    <property type="project" value="ARUK-UCL"/>
</dbReference>
<dbReference type="GO" id="GO:0005829">
    <property type="term" value="C:cytosol"/>
    <property type="evidence" value="ECO:0000304"/>
    <property type="project" value="Reactome"/>
</dbReference>
<dbReference type="GO" id="GO:0000815">
    <property type="term" value="C:ESCRT III complex"/>
    <property type="evidence" value="ECO:0000314"/>
    <property type="project" value="UniProtKB"/>
</dbReference>
<dbReference type="GO" id="GO:0070062">
    <property type="term" value="C:extracellular exosome"/>
    <property type="evidence" value="ECO:0007005"/>
    <property type="project" value="UniProtKB"/>
</dbReference>
<dbReference type="GO" id="GO:0000776">
    <property type="term" value="C:kinetochore"/>
    <property type="evidence" value="ECO:0000314"/>
    <property type="project" value="ComplexPortal"/>
</dbReference>
<dbReference type="GO" id="GO:0005828">
    <property type="term" value="C:kinetochore microtubule"/>
    <property type="evidence" value="ECO:0000314"/>
    <property type="project" value="ComplexPortal"/>
</dbReference>
<dbReference type="GO" id="GO:0005765">
    <property type="term" value="C:lysosomal membrane"/>
    <property type="evidence" value="ECO:0000314"/>
    <property type="project" value="ComplexPortal"/>
</dbReference>
<dbReference type="GO" id="GO:0016020">
    <property type="term" value="C:membrane"/>
    <property type="evidence" value="ECO:0007005"/>
    <property type="project" value="UniProtKB"/>
</dbReference>
<dbReference type="GO" id="GO:0030117">
    <property type="term" value="C:membrane coat"/>
    <property type="evidence" value="ECO:0000315"/>
    <property type="project" value="UniProtKB"/>
</dbReference>
<dbReference type="GO" id="GO:0030496">
    <property type="term" value="C:midbody"/>
    <property type="evidence" value="ECO:0000314"/>
    <property type="project" value="ComplexPortal"/>
</dbReference>
<dbReference type="GO" id="GO:0005771">
    <property type="term" value="C:multivesicular body"/>
    <property type="evidence" value="ECO:0000318"/>
    <property type="project" value="GO_Central"/>
</dbReference>
<dbReference type="GO" id="GO:0032585">
    <property type="term" value="C:multivesicular body membrane"/>
    <property type="evidence" value="ECO:0000314"/>
    <property type="project" value="ComplexPortal"/>
</dbReference>
<dbReference type="GO" id="GO:0005635">
    <property type="term" value="C:nuclear envelope"/>
    <property type="evidence" value="ECO:0000314"/>
    <property type="project" value="UniProtKB"/>
</dbReference>
<dbReference type="GO" id="GO:0005643">
    <property type="term" value="C:nuclear pore"/>
    <property type="evidence" value="ECO:0000314"/>
    <property type="project" value="ComplexPortal"/>
</dbReference>
<dbReference type="GO" id="GO:0005886">
    <property type="term" value="C:plasma membrane"/>
    <property type="evidence" value="ECO:0000314"/>
    <property type="project" value="ComplexPortal"/>
</dbReference>
<dbReference type="GO" id="GO:0031210">
    <property type="term" value="F:phosphatidylcholine binding"/>
    <property type="evidence" value="ECO:0000315"/>
    <property type="project" value="UniProtKB"/>
</dbReference>
<dbReference type="GO" id="GO:0019904">
    <property type="term" value="F:protein domain specific binding"/>
    <property type="evidence" value="ECO:0000353"/>
    <property type="project" value="UniProtKB"/>
</dbReference>
<dbReference type="GO" id="GO:0097352">
    <property type="term" value="P:autophagosome maturation"/>
    <property type="evidence" value="ECO:0000315"/>
    <property type="project" value="ComplexPortal"/>
</dbReference>
<dbReference type="GO" id="GO:0006914">
    <property type="term" value="P:autophagy"/>
    <property type="evidence" value="ECO:0000315"/>
    <property type="project" value="ComplexPortal"/>
</dbReference>
<dbReference type="GO" id="GO:0032509">
    <property type="term" value="P:endosome transport via multivesicular body sorting pathway"/>
    <property type="evidence" value="ECO:0000318"/>
    <property type="project" value="GO_Central"/>
</dbReference>
<dbReference type="GO" id="GO:1904903">
    <property type="term" value="P:ESCRT III complex disassembly"/>
    <property type="evidence" value="ECO:0000303"/>
    <property type="project" value="ParkinsonsUK-UCL"/>
</dbReference>
<dbReference type="GO" id="GO:0045184">
    <property type="term" value="P:establishment of protein localization"/>
    <property type="evidence" value="ECO:0000315"/>
    <property type="project" value="UniProtKB"/>
</dbReference>
<dbReference type="GO" id="GO:0010458">
    <property type="term" value="P:exit from mitosis"/>
    <property type="evidence" value="ECO:0000315"/>
    <property type="project" value="UniProtKB"/>
</dbReference>
<dbReference type="GO" id="GO:1902774">
    <property type="term" value="P:late endosome to lysosome transport"/>
    <property type="evidence" value="ECO:0000315"/>
    <property type="project" value="ComplexPortal"/>
</dbReference>
<dbReference type="GO" id="GO:0045324">
    <property type="term" value="P:late endosome to vacuole transport"/>
    <property type="evidence" value="ECO:0000318"/>
    <property type="project" value="GO_Central"/>
</dbReference>
<dbReference type="GO" id="GO:0016236">
    <property type="term" value="P:macroautophagy"/>
    <property type="evidence" value="ECO:0000304"/>
    <property type="project" value="ParkinsonsUK-UCL"/>
</dbReference>
<dbReference type="GO" id="GO:0090148">
    <property type="term" value="P:membrane fission"/>
    <property type="evidence" value="ECO:0000303"/>
    <property type="project" value="ComplexPortal"/>
</dbReference>
<dbReference type="GO" id="GO:0010324">
    <property type="term" value="P:membrane invagination"/>
    <property type="evidence" value="ECO:0000315"/>
    <property type="project" value="UniProtKB"/>
</dbReference>
<dbReference type="GO" id="GO:0061952">
    <property type="term" value="P:midbody abscission"/>
    <property type="evidence" value="ECO:0000315"/>
    <property type="project" value="UniProtKB"/>
</dbReference>
<dbReference type="GO" id="GO:0007080">
    <property type="term" value="P:mitotic metaphase chromosome alignment"/>
    <property type="evidence" value="ECO:0000315"/>
    <property type="project" value="UniProtKB"/>
</dbReference>
<dbReference type="GO" id="GO:0036258">
    <property type="term" value="P:multivesicular body assembly"/>
    <property type="evidence" value="ECO:0000304"/>
    <property type="project" value="ParkinsonsUK-UCL"/>
</dbReference>
<dbReference type="GO" id="GO:0071985">
    <property type="term" value="P:multivesicular body sorting pathway"/>
    <property type="evidence" value="ECO:0000314"/>
    <property type="project" value="ComplexPortal"/>
</dbReference>
<dbReference type="GO" id="GO:0061763">
    <property type="term" value="P:multivesicular body-lysosome fusion"/>
    <property type="evidence" value="ECO:0000303"/>
    <property type="project" value="ComplexPortal"/>
</dbReference>
<dbReference type="GO" id="GO:1903723">
    <property type="term" value="P:negative regulation of centriole elongation"/>
    <property type="evidence" value="ECO:0000315"/>
    <property type="project" value="UniProtKB"/>
</dbReference>
<dbReference type="GO" id="GO:0031468">
    <property type="term" value="P:nuclear membrane reassembly"/>
    <property type="evidence" value="ECO:0000315"/>
    <property type="project" value="UniProtKB"/>
</dbReference>
<dbReference type="GO" id="GO:0006997">
    <property type="term" value="P:nucleus organization"/>
    <property type="evidence" value="ECO:0000315"/>
    <property type="project" value="UniProtKB"/>
</dbReference>
<dbReference type="GO" id="GO:0001778">
    <property type="term" value="P:plasma membrane repair"/>
    <property type="evidence" value="ECO:0000314"/>
    <property type="project" value="ComplexPortal"/>
</dbReference>
<dbReference type="GO" id="GO:1903543">
    <property type="term" value="P:positive regulation of exosomal secretion"/>
    <property type="evidence" value="ECO:0000315"/>
    <property type="project" value="UniProtKB"/>
</dbReference>
<dbReference type="GO" id="GO:0051260">
    <property type="term" value="P:protein homooligomerization"/>
    <property type="evidence" value="ECO:0000315"/>
    <property type="project" value="UniProtKB"/>
</dbReference>
<dbReference type="GO" id="GO:0051258">
    <property type="term" value="P:protein polymerization"/>
    <property type="evidence" value="ECO:0000315"/>
    <property type="project" value="UniProtKB"/>
</dbReference>
<dbReference type="GO" id="GO:0015031">
    <property type="term" value="P:protein transport"/>
    <property type="evidence" value="ECO:0000318"/>
    <property type="project" value="GO_Central"/>
</dbReference>
<dbReference type="GO" id="GO:0010824">
    <property type="term" value="P:regulation of centrosome duplication"/>
    <property type="evidence" value="ECO:0000315"/>
    <property type="project" value="UniProtKB"/>
</dbReference>
<dbReference type="GO" id="GO:1901673">
    <property type="term" value="P:regulation of mitotic spindle assembly"/>
    <property type="evidence" value="ECO:0000315"/>
    <property type="project" value="UniProtKB"/>
</dbReference>
<dbReference type="GO" id="GO:0043162">
    <property type="term" value="P:ubiquitin-dependent protein catabolic process via the multivesicular body sorting pathway"/>
    <property type="evidence" value="ECO:0000314"/>
    <property type="project" value="ComplexPortal"/>
</dbReference>
<dbReference type="GO" id="GO:0051469">
    <property type="term" value="P:vesicle fusion with vacuole"/>
    <property type="evidence" value="ECO:0000303"/>
    <property type="project" value="ComplexPortal"/>
</dbReference>
<dbReference type="GO" id="GO:0046761">
    <property type="term" value="P:viral budding from plasma membrane"/>
    <property type="evidence" value="ECO:0000314"/>
    <property type="project" value="ComplexPortal"/>
</dbReference>
<dbReference type="GO" id="GO:0039702">
    <property type="term" value="P:viral budding via host ESCRT complex"/>
    <property type="evidence" value="ECO:0000314"/>
    <property type="project" value="UniProtKB"/>
</dbReference>
<dbReference type="GO" id="GO:0019076">
    <property type="term" value="P:viral release from host cell"/>
    <property type="evidence" value="ECO:0000315"/>
    <property type="project" value="UniProtKB"/>
</dbReference>
<dbReference type="Gene3D" id="6.10.140.1230">
    <property type="match status" value="1"/>
</dbReference>
<dbReference type="InterPro" id="IPR005024">
    <property type="entry name" value="Snf7_fam"/>
</dbReference>
<dbReference type="PANTHER" id="PTHR10476">
    <property type="entry name" value="CHARGED MULTIVESICULAR BODY PROTEIN"/>
    <property type="match status" value="1"/>
</dbReference>
<dbReference type="Pfam" id="PF03357">
    <property type="entry name" value="Snf7"/>
    <property type="match status" value="1"/>
</dbReference>
<accession>O43633</accession>
<accession>B2R4W6</accession>
<accession>Q3ZTT0</accession>
<reference key="1">
    <citation type="submission" date="1998-01" db="EMBL/GenBank/DDBJ databases">
        <authorList>
            <person name="Slater C."/>
            <person name="Thill G."/>
            <person name="Obar R."/>
        </authorList>
    </citation>
    <scope>NUCLEOTIDE SEQUENCE [MRNA]</scope>
</reference>
<reference key="2">
    <citation type="submission" date="2000-03" db="EMBL/GenBank/DDBJ databases">
        <title>Role of the BC-2 gene in breast cancer.</title>
        <authorList>
            <person name="Koczan D."/>
            <person name="Reimer T."/>
            <person name="Rump A."/>
            <person name="Merck-Rousseau M.F."/>
            <person name="Rosenthal A."/>
            <person name="Friese K."/>
            <person name="Thiesen H.J."/>
        </authorList>
    </citation>
    <scope>NUCLEOTIDE SEQUENCE [GENOMIC DNA]</scope>
</reference>
<reference key="3">
    <citation type="journal article" date="2006" name="BMC Genomics">
        <title>NovelFam3000 -- uncharacterized human protein domains conserved across model organisms.</title>
        <authorList>
            <person name="Kemmer D."/>
            <person name="Podowski R.M."/>
            <person name="Arenillas D."/>
            <person name="Lim J."/>
            <person name="Hodges E."/>
            <person name="Roth P."/>
            <person name="Sonnhammer E.L.L."/>
            <person name="Hoeoeg C."/>
            <person name="Wasserman W.W."/>
        </authorList>
    </citation>
    <scope>NUCLEOTIDE SEQUENCE [MRNA]</scope>
</reference>
<reference key="4">
    <citation type="submission" date="2003-05" db="EMBL/GenBank/DDBJ databases">
        <title>Cloning of human full-length CDSs in BD Creator(TM) system donor vector.</title>
        <authorList>
            <person name="Kalnine N."/>
            <person name="Chen X."/>
            <person name="Rolfs A."/>
            <person name="Halleck A."/>
            <person name="Hines L."/>
            <person name="Eisenstein S."/>
            <person name="Koundinya M."/>
            <person name="Raphael J."/>
            <person name="Moreira D."/>
            <person name="Kelley T."/>
            <person name="LaBaer J."/>
            <person name="Lin Y."/>
            <person name="Phelan M."/>
            <person name="Farmer A."/>
        </authorList>
    </citation>
    <scope>NUCLEOTIDE SEQUENCE [LARGE SCALE MRNA]</scope>
</reference>
<reference key="5">
    <citation type="submission" date="2004-06" db="EMBL/GenBank/DDBJ databases">
        <title>Cloning of human full open reading frames in Gateway(TM) system entry vector (pDONR201).</title>
        <authorList>
            <person name="Ebert L."/>
            <person name="Schick M."/>
            <person name="Neubert P."/>
            <person name="Schatten R."/>
            <person name="Henze S."/>
            <person name="Korn B."/>
        </authorList>
    </citation>
    <scope>NUCLEOTIDE SEQUENCE [LARGE SCALE MRNA]</scope>
</reference>
<reference key="6">
    <citation type="journal article" date="2004" name="Nat. Genet.">
        <title>Complete sequencing and characterization of 21,243 full-length human cDNAs.</title>
        <authorList>
            <person name="Ota T."/>
            <person name="Suzuki Y."/>
            <person name="Nishikawa T."/>
            <person name="Otsuki T."/>
            <person name="Sugiyama T."/>
            <person name="Irie R."/>
            <person name="Wakamatsu A."/>
            <person name="Hayashi K."/>
            <person name="Sato H."/>
            <person name="Nagai K."/>
            <person name="Kimura K."/>
            <person name="Makita H."/>
            <person name="Sekine M."/>
            <person name="Obayashi M."/>
            <person name="Nishi T."/>
            <person name="Shibahara T."/>
            <person name="Tanaka T."/>
            <person name="Ishii S."/>
            <person name="Yamamoto J."/>
            <person name="Saito K."/>
            <person name="Kawai Y."/>
            <person name="Isono Y."/>
            <person name="Nakamura Y."/>
            <person name="Nagahari K."/>
            <person name="Murakami K."/>
            <person name="Yasuda T."/>
            <person name="Iwayanagi T."/>
            <person name="Wagatsuma M."/>
            <person name="Shiratori A."/>
            <person name="Sudo H."/>
            <person name="Hosoiri T."/>
            <person name="Kaku Y."/>
            <person name="Kodaira H."/>
            <person name="Kondo H."/>
            <person name="Sugawara M."/>
            <person name="Takahashi M."/>
            <person name="Kanda K."/>
            <person name="Yokoi T."/>
            <person name="Furuya T."/>
            <person name="Kikkawa E."/>
            <person name="Omura Y."/>
            <person name="Abe K."/>
            <person name="Kamihara K."/>
            <person name="Katsuta N."/>
            <person name="Sato K."/>
            <person name="Tanikawa M."/>
            <person name="Yamazaki M."/>
            <person name="Ninomiya K."/>
            <person name="Ishibashi T."/>
            <person name="Yamashita H."/>
            <person name="Murakawa K."/>
            <person name="Fujimori K."/>
            <person name="Tanai H."/>
            <person name="Kimata M."/>
            <person name="Watanabe M."/>
            <person name="Hiraoka S."/>
            <person name="Chiba Y."/>
            <person name="Ishida S."/>
            <person name="Ono Y."/>
            <person name="Takiguchi S."/>
            <person name="Watanabe S."/>
            <person name="Yosida M."/>
            <person name="Hotuta T."/>
            <person name="Kusano J."/>
            <person name="Kanehori K."/>
            <person name="Takahashi-Fujii A."/>
            <person name="Hara H."/>
            <person name="Tanase T.-O."/>
            <person name="Nomura Y."/>
            <person name="Togiya S."/>
            <person name="Komai F."/>
            <person name="Hara R."/>
            <person name="Takeuchi K."/>
            <person name="Arita M."/>
            <person name="Imose N."/>
            <person name="Musashino K."/>
            <person name="Yuuki H."/>
            <person name="Oshima A."/>
            <person name="Sasaki N."/>
            <person name="Aotsuka S."/>
            <person name="Yoshikawa Y."/>
            <person name="Matsunawa H."/>
            <person name="Ichihara T."/>
            <person name="Shiohata N."/>
            <person name="Sano S."/>
            <person name="Moriya S."/>
            <person name="Momiyama H."/>
            <person name="Satoh N."/>
            <person name="Takami S."/>
            <person name="Terashima Y."/>
            <person name="Suzuki O."/>
            <person name="Nakagawa S."/>
            <person name="Senoh A."/>
            <person name="Mizoguchi H."/>
            <person name="Goto Y."/>
            <person name="Shimizu F."/>
            <person name="Wakebe H."/>
            <person name="Hishigaki H."/>
            <person name="Watanabe T."/>
            <person name="Sugiyama A."/>
            <person name="Takemoto M."/>
            <person name="Kawakami B."/>
            <person name="Yamazaki M."/>
            <person name="Watanabe K."/>
            <person name="Kumagai A."/>
            <person name="Itakura S."/>
            <person name="Fukuzumi Y."/>
            <person name="Fujimori Y."/>
            <person name="Komiyama M."/>
            <person name="Tashiro H."/>
            <person name="Tanigami A."/>
            <person name="Fujiwara T."/>
            <person name="Ono T."/>
            <person name="Yamada K."/>
            <person name="Fujii Y."/>
            <person name="Ozaki K."/>
            <person name="Hirao M."/>
            <person name="Ohmori Y."/>
            <person name="Kawabata A."/>
            <person name="Hikiji T."/>
            <person name="Kobatake N."/>
            <person name="Inagaki H."/>
            <person name="Ikema Y."/>
            <person name="Okamoto S."/>
            <person name="Okitani R."/>
            <person name="Kawakami T."/>
            <person name="Noguchi S."/>
            <person name="Itoh T."/>
            <person name="Shigeta K."/>
            <person name="Senba T."/>
            <person name="Matsumura K."/>
            <person name="Nakajima Y."/>
            <person name="Mizuno T."/>
            <person name="Morinaga M."/>
            <person name="Sasaki M."/>
            <person name="Togashi T."/>
            <person name="Oyama M."/>
            <person name="Hata H."/>
            <person name="Watanabe M."/>
            <person name="Komatsu T."/>
            <person name="Mizushima-Sugano J."/>
            <person name="Satoh T."/>
            <person name="Shirai Y."/>
            <person name="Takahashi Y."/>
            <person name="Nakagawa K."/>
            <person name="Okumura K."/>
            <person name="Nagase T."/>
            <person name="Nomura N."/>
            <person name="Kikuchi H."/>
            <person name="Masuho Y."/>
            <person name="Yamashita R."/>
            <person name="Nakai K."/>
            <person name="Yada T."/>
            <person name="Nakamura Y."/>
            <person name="Ohara O."/>
            <person name="Isogai T."/>
            <person name="Sugano S."/>
        </authorList>
    </citation>
    <scope>NUCLEOTIDE SEQUENCE [LARGE SCALE MRNA]</scope>
    <source>
        <tissue>Skeletal muscle</tissue>
    </source>
</reference>
<reference key="7">
    <citation type="submission" date="2005-07" db="EMBL/GenBank/DDBJ databases">
        <authorList>
            <person name="Mural R.J."/>
            <person name="Istrail S."/>
            <person name="Sutton G.G."/>
            <person name="Florea L."/>
            <person name="Halpern A.L."/>
            <person name="Mobarry C.M."/>
            <person name="Lippert R."/>
            <person name="Walenz B."/>
            <person name="Shatkay H."/>
            <person name="Dew I."/>
            <person name="Miller J.R."/>
            <person name="Flanigan M.J."/>
            <person name="Edwards N.J."/>
            <person name="Bolanos R."/>
            <person name="Fasulo D."/>
            <person name="Halldorsson B.V."/>
            <person name="Hannenhalli S."/>
            <person name="Turner R."/>
            <person name="Yooseph S."/>
            <person name="Lu F."/>
            <person name="Nusskern D.R."/>
            <person name="Shue B.C."/>
            <person name="Zheng X.H."/>
            <person name="Zhong F."/>
            <person name="Delcher A.L."/>
            <person name="Huson D.H."/>
            <person name="Kravitz S.A."/>
            <person name="Mouchard L."/>
            <person name="Reinert K."/>
            <person name="Remington K.A."/>
            <person name="Clark A.G."/>
            <person name="Waterman M.S."/>
            <person name="Eichler E.E."/>
            <person name="Adams M.D."/>
            <person name="Hunkapiller M.W."/>
            <person name="Myers E.W."/>
            <person name="Venter J.C."/>
        </authorList>
    </citation>
    <scope>NUCLEOTIDE SEQUENCE [LARGE SCALE GENOMIC DNA]</scope>
</reference>
<reference key="8">
    <citation type="journal article" date="2004" name="Genome Res.">
        <title>The status, quality, and expansion of the NIH full-length cDNA project: the Mammalian Gene Collection (MGC).</title>
        <authorList>
            <consortium name="The MGC Project Team"/>
        </authorList>
    </citation>
    <scope>NUCLEOTIDE SEQUENCE [LARGE SCALE MRNA]</scope>
    <source>
        <tissue>Skin</tissue>
    </source>
</reference>
<reference key="9">
    <citation type="journal article" date="2003" name="Nat. Biotechnol.">
        <title>Exploring proteomes and analyzing protein processing by mass spectrometric identification of sorted N-terminal peptides.</title>
        <authorList>
            <person name="Gevaert K."/>
            <person name="Goethals M."/>
            <person name="Martens L."/>
            <person name="Van Damme J."/>
            <person name="Staes A."/>
            <person name="Thomas G.R."/>
            <person name="Vandekerckhove J."/>
        </authorList>
    </citation>
    <scope>PROTEIN SEQUENCE OF 1-7</scope>
    <scope>ACETYLATION AT MET-1</scope>
    <source>
        <tissue>Platelet</tissue>
    </source>
</reference>
<reference key="10">
    <citation type="patent" date="1996-06-05" number="US5914238">
        <title>Materials and methods for detection of breast cancer.</title>
        <authorList>
            <person name="Keesee S.K."/>
            <person name="Obar R."/>
            <person name="Wu Y.-J."/>
        </authorList>
    </citation>
    <scope>NUCLEOTIDE SEQUENCE [MRNA] OF 72-222</scope>
    <scope>PROTEIN SEQUENCE OF 75-89 AND 197-205</scope>
</reference>
<reference key="11">
    <citation type="journal article" date="2001" name="J. Cell Sci.">
        <title>CHMP1 functions as a member of a newly defined family of vesicle trafficking proteins.</title>
        <authorList>
            <person name="Howard T.L."/>
            <person name="Stauffer D.R."/>
            <person name="Degnin C.R."/>
            <person name="Hollenberg S.M."/>
        </authorList>
    </citation>
    <scope>INTERACTION WITH VPS4B</scope>
</reference>
<reference key="12">
    <citation type="journal article" date="2003" name="Cell">
        <title>The protein network of HIV budding.</title>
        <authorList>
            <person name="von Schwedler U.K."/>
            <person name="Stuchell M."/>
            <person name="Mueller B."/>
            <person name="Ward D.M."/>
            <person name="Chung H.-Y."/>
            <person name="Morita E."/>
            <person name="Wang H.E."/>
            <person name="Davis T."/>
            <person name="He G.P."/>
            <person name="Cimbora D.M."/>
            <person name="Scott A."/>
            <person name="Kraeusslich H.-G."/>
            <person name="Kaplan J."/>
            <person name="Morham S.G."/>
            <person name="Sundquist W.I."/>
        </authorList>
    </citation>
    <scope>FUNCTION (MICROBIAL INFECTION)</scope>
    <scope>INTERACTION WITH VPS4A AND VPS4B</scope>
</reference>
<reference key="13">
    <citation type="journal article" date="2003" name="Proc. Natl. Acad. Sci. U.S.A.">
        <title>Divergent retroviral late-budding domains recruit vacuolar protein sorting factors by using alternative adaptor proteins.</title>
        <authorList>
            <person name="Martin-Serrano J."/>
            <person name="Yarovoy A."/>
            <person name="Perez-Caballero D."/>
            <person name="Bieniasz P.D."/>
        </authorList>
    </citation>
    <scope>FUNCTION (MICROBIAL INFECTION)</scope>
    <scope>INTERACTION WITH CHMP1B; CHMP2B; CHMP3; CHMP4A; CHMP4B; CHMP4C; CHMP5 AND VPS4A</scope>
</reference>
<reference key="14">
    <citation type="journal article" date="2003" name="Proc. Natl. Acad. Sci. U.S.A.">
        <authorList>
            <person name="Martin-Serrano J."/>
            <person name="Yarovoy A."/>
            <person name="Perez-Caballero D."/>
            <person name="Bieniasz P.D."/>
        </authorList>
    </citation>
    <scope>ERRATUM OF PUBMED:14519844</scope>
</reference>
<reference key="15">
    <citation type="journal article" date="2006" name="Genomics">
        <title>A systematic analysis of human CHMP protein interactions: additional MIT domain-containing proteins bind to multiple components of the human ESCRT III complex.</title>
        <authorList>
            <person name="Tsang H.T.H."/>
            <person name="Connell J.W."/>
            <person name="Brown S.E."/>
            <person name="Thompson A."/>
            <person name="Reid E."/>
            <person name="Sanderson C.M."/>
        </authorList>
    </citation>
    <scope>SUBCELLULAR LOCATION</scope>
    <scope>INTERACTION WITH MITD1</scope>
</reference>
<reference key="16">
    <citation type="journal article" date="2007" name="EMBO J.">
        <title>Human ESCRT and ALIX proteins interact with proteins of the midbody and function in cytokinesis.</title>
        <authorList>
            <person name="Morita E."/>
            <person name="Sandrin V."/>
            <person name="Chung H.Y."/>
            <person name="Morham S.G."/>
            <person name="Gygi S.P."/>
            <person name="Rodesch C.K."/>
            <person name="Sundquist W.I."/>
        </authorList>
    </citation>
    <scope>SUBCELLULAR LOCATION</scope>
</reference>
<reference key="17">
    <citation type="journal article" date="2007" name="Traffic">
        <title>Structure/function analysis of four core ESCRT-III proteins reveals common regulatory role for extreme C-terminal domain.</title>
        <authorList>
            <person name="Shim S."/>
            <person name="Kimpler L.A."/>
            <person name="Hanson P.I."/>
        </authorList>
    </citation>
    <scope>AUTOINHIBITORY MECHANISM</scope>
    <scope>INTERACTION WITH VPS4B</scope>
    <scope>MUTAGENESIS OF 181-ASN--ASP-222</scope>
</reference>
<reference key="18">
    <citation type="journal article" date="2008" name="Mol. Biol. Cell">
        <title>Novel interactions of ESCRT-III with LIP5 and VPS4 and their implications for ESCRT-III disassembly.</title>
        <authorList>
            <person name="Shim S."/>
            <person name="Merrill S.A."/>
            <person name="Hanson P.I."/>
        </authorList>
    </citation>
    <scope>INTERACTION WITH VTA1</scope>
    <scope>MUTAGENESIS OF 169-ASP-GLU-170; LEU-216 AND 217-LYS--ASP-222</scope>
</reference>
<reference key="19">
    <citation type="journal article" date="2008" name="Science">
        <title>Helical structures of ESCRT-III are disassembled by VPS4.</title>
        <authorList>
            <person name="Lata S."/>
            <person name="Schoehn G."/>
            <person name="Jain A."/>
            <person name="Pires R."/>
            <person name="Piehler J."/>
            <person name="Goettlinger H.G."/>
            <person name="Weissenhorn W."/>
        </authorList>
    </citation>
    <scope>POLYMERIZATION WITH CHMP3</scope>
    <scope>ELECTRON MICROSCOPY</scope>
</reference>
<reference key="20">
    <citation type="journal article" date="2011" name="BMC Syst. Biol.">
        <title>Initial characterization of the human central proteome.</title>
        <authorList>
            <person name="Burkard T.R."/>
            <person name="Planyavsky M."/>
            <person name="Kaupe I."/>
            <person name="Breitwieser F.P."/>
            <person name="Buerckstuemmer T."/>
            <person name="Bennett K.L."/>
            <person name="Superti-Furga G."/>
            <person name="Colinge J."/>
        </authorList>
    </citation>
    <scope>IDENTIFICATION BY MASS SPECTROMETRY [LARGE SCALE ANALYSIS]</scope>
</reference>
<reference key="21">
    <citation type="journal article" date="2011" name="J. Virol.">
        <title>Mechanism of inhibition of retrovirus release from cells by interferon-induced gene ISG15.</title>
        <authorList>
            <person name="Kuang Z."/>
            <person name="Seo E.J."/>
            <person name="Leis J."/>
        </authorList>
    </citation>
    <scope>ISGYLATION</scope>
    <scope>INTERACTION WITH VTA1 AND VPS4A</scope>
</reference>
<reference key="22">
    <citation type="journal article" date="2011" name="Science">
        <title>Cortical constriction during abscission involves helices of ESCRT-III-dependent filaments.</title>
        <authorList>
            <person name="Guizetti J."/>
            <person name="Schermelleh L."/>
            <person name="Maentler J."/>
            <person name="Maar S."/>
            <person name="Poser I."/>
            <person name="Leonhardt H."/>
            <person name="Mueller-Reichert T."/>
            <person name="Gerlich D.W."/>
        </authorList>
    </citation>
    <scope>FUNCTION</scope>
</reference>
<reference key="23">
    <citation type="journal article" date="2013" name="J. Proteome Res.">
        <title>Toward a comprehensive characterization of a human cancer cell phosphoproteome.</title>
        <authorList>
            <person name="Zhou H."/>
            <person name="Di Palma S."/>
            <person name="Preisinger C."/>
            <person name="Peng M."/>
            <person name="Polat A.N."/>
            <person name="Heck A.J."/>
            <person name="Mohammed S."/>
        </authorList>
    </citation>
    <scope>PHOSPHORYLATION [LARGE SCALE ANALYSIS] AT SER-203</scope>
    <scope>IDENTIFICATION BY MASS SPECTROMETRY [LARGE SCALE ANALYSIS]</scope>
    <source>
        <tissue>Erythroleukemia</tissue>
    </source>
</reference>
<reference key="24">
    <citation type="journal article" date="2014" name="J. Proteomics">
        <title>An enzyme assisted RP-RPLC approach for in-depth analysis of human liver phosphoproteome.</title>
        <authorList>
            <person name="Bian Y."/>
            <person name="Song C."/>
            <person name="Cheng K."/>
            <person name="Dong M."/>
            <person name="Wang F."/>
            <person name="Huang J."/>
            <person name="Sun D."/>
            <person name="Wang L."/>
            <person name="Ye M."/>
            <person name="Zou H."/>
        </authorList>
    </citation>
    <scope>PHOSPHORYLATION [LARGE SCALE ANALYSIS] AT SER-184; THR-185; SER-188; SER-190 AND SER-203</scope>
    <scope>IDENTIFICATION BY MASS SPECTROMETRY [LARGE SCALE ANALYSIS]</scope>
    <source>
        <tissue>Liver</tissue>
    </source>
</reference>
<reference key="25">
    <citation type="journal article" date="2015" name="Nature">
        <title>Spastin and ESCRT-III coordinate mitotic spindle disassembly and nuclear envelope sealing.</title>
        <authorList>
            <person name="Vietri M."/>
            <person name="Schink K.O."/>
            <person name="Campsteijn C."/>
            <person name="Wegner C.S."/>
            <person name="Schultz S.W."/>
            <person name="Christ L."/>
            <person name="Thoresen S.B."/>
            <person name="Brech A."/>
            <person name="Raiborg C."/>
            <person name="Stenmark H."/>
        </authorList>
    </citation>
    <scope>FUNCTION</scope>
</reference>
<reference key="26">
    <citation type="journal article" date="2017" name="Proc. Natl. Acad. Sci. U.S.A.">
        <title>LEM2 recruits CHMP7 for ESCRT-mediated nuclear envelope closure in fission yeast and human cells.</title>
        <authorList>
            <person name="Gu M."/>
            <person name="LaJoie D."/>
            <person name="Chen O.S."/>
            <person name="von Appen A."/>
            <person name="Ladinsky M.S."/>
            <person name="Redd M.J."/>
            <person name="Nikolova L."/>
            <person name="Bjorkman P.J."/>
            <person name="Sundquist W.I."/>
            <person name="Ullman K.S."/>
            <person name="Frost A."/>
        </authorList>
    </citation>
    <scope>FUNCTION</scope>
    <scope>SUBCELLULAR LOCATION</scope>
</reference>
<feature type="chain" id="PRO_0000211462" description="Charged multivesicular body protein 2a">
    <location>
        <begin position="1"/>
        <end position="222"/>
    </location>
</feature>
<feature type="region of interest" description="Interaction with VPS4B">
    <location>
        <begin position="56"/>
        <end position="222"/>
    </location>
</feature>
<feature type="region of interest" description="Interaction with VTA1">
    <location>
        <begin position="217"/>
        <end position="222"/>
    </location>
</feature>
<feature type="coiled-coil region" evidence="1">
    <location>
        <begin position="12"/>
        <end position="53"/>
    </location>
</feature>
<feature type="coiled-coil region" evidence="1">
    <location>
        <begin position="195"/>
        <end position="222"/>
    </location>
</feature>
<feature type="short sequence motif" description="MIT-interacting motif">
    <location>
        <begin position="210"/>
        <end position="220"/>
    </location>
</feature>
<feature type="modified residue" description="N-acetylmethionine" evidence="3">
    <location>
        <position position="1"/>
    </location>
</feature>
<feature type="modified residue" description="Phosphoserine" evidence="16">
    <location>
        <position position="184"/>
    </location>
</feature>
<feature type="modified residue" description="Phosphothreonine" evidence="16">
    <location>
        <position position="185"/>
    </location>
</feature>
<feature type="modified residue" description="Phosphoserine" evidence="16">
    <location>
        <position position="188"/>
    </location>
</feature>
<feature type="modified residue" description="Phosphoserine" evidence="16">
    <location>
        <position position="190"/>
    </location>
</feature>
<feature type="modified residue" description="Phosphoserine" evidence="15 16">
    <location>
        <position position="203"/>
    </location>
</feature>
<feature type="mutagenesis site" description="Diminishes interaction with VPS4B." evidence="9">
    <original>DE</original>
    <variation>AA</variation>
    <location>
        <begin position="169"/>
        <end position="170"/>
    </location>
</feature>
<feature type="mutagenesis site" description="Membrane association; releases autoinhibition." evidence="7">
    <location>
        <begin position="181"/>
        <end position="222"/>
    </location>
</feature>
<feature type="mutagenesis site" description="Diminishes interaction with VTA1." evidence="9">
    <original>L</original>
    <variation>A</variation>
    <location>
        <position position="216"/>
    </location>
</feature>
<feature type="mutagenesis site" description="Abolishes interaction with VTA1." evidence="9">
    <location>
        <begin position="217"/>
        <end position="222"/>
    </location>
</feature>
<feature type="helix" evidence="17">
    <location>
        <begin position="11"/>
        <end position="53"/>
    </location>
</feature>
<feature type="helix" evidence="17">
    <location>
        <begin position="58"/>
        <end position="114"/>
    </location>
</feature>
<feature type="helix" evidence="17">
    <location>
        <begin position="119"/>
        <end position="151"/>
    </location>
</feature>
<sequence length="222" mass="25104">MDLLFGRRKTPEELLRQNQRALNRAMRELDRERQKLETQEKKIIADIKKMAKQGQMDAVRIMAKDLVRTRRYVRKFVLMRANIQAVSLKIQTLKSNNSMAQAMKGVTKAMGTMNRQLKLPQIQKIMMEFERQAEIMDMKEEMMNDAIDDAMGDEEDEEESDAVVSQVLDELGLSLTDELSNLPSTGGSLSVAAGGKKAEAAASALADADADLEERLKNLRRD</sequence>
<keyword id="KW-0002">3D-structure</keyword>
<keyword id="KW-0007">Acetylation</keyword>
<keyword id="KW-0175">Coiled coil</keyword>
<keyword id="KW-0903">Direct protein sequencing</keyword>
<keyword id="KW-0967">Endosome</keyword>
<keyword id="KW-0945">Host-virus interaction</keyword>
<keyword id="KW-0472">Membrane</keyword>
<keyword id="KW-0539">Nucleus</keyword>
<keyword id="KW-0597">Phosphoprotein</keyword>
<keyword id="KW-0653">Protein transport</keyword>
<keyword id="KW-1267">Proteomics identification</keyword>
<keyword id="KW-1185">Reference proteome</keyword>
<keyword id="KW-0813">Transport</keyword>
<keyword id="KW-0832">Ubl conjugation</keyword>
<protein>
    <recommendedName>
        <fullName>Charged multivesicular body protein 2a</fullName>
    </recommendedName>
    <alternativeName>
        <fullName>Chromatin-modifying protein 2a</fullName>
        <shortName>CHMP2a</shortName>
    </alternativeName>
    <alternativeName>
        <fullName>Putative breast adenocarcinoma marker BC-2</fullName>
    </alternativeName>
    <alternativeName>
        <fullName>Vacuolar protein sorting-associated protein 2-1</fullName>
        <shortName>Vps2-1</shortName>
        <shortName>hVps2-1</shortName>
    </alternativeName>
</protein>
<name>CHM2A_HUMAN</name>